<evidence type="ECO:0000250" key="1">
    <source>
        <dbReference type="UniProtKB" id="A2AHG0"/>
    </source>
</evidence>
<evidence type="ECO:0000250" key="2">
    <source>
        <dbReference type="UniProtKB" id="Q8K1Q4"/>
    </source>
</evidence>
<evidence type="ECO:0000255" key="3"/>
<evidence type="ECO:0000256" key="4">
    <source>
        <dbReference type="SAM" id="MobiDB-lite"/>
    </source>
</evidence>
<evidence type="ECO:0000303" key="5">
    <source>
    </source>
</evidence>
<evidence type="ECO:0000305" key="6"/>
<evidence type="ECO:0000312" key="7">
    <source>
        <dbReference type="EMBL" id="BAA25478.2"/>
    </source>
</evidence>
<evidence type="ECO:0000312" key="8">
    <source>
        <dbReference type="HGNC" id="HGNC:30139"/>
    </source>
</evidence>
<sequence length="673" mass="71791">MAKLETLPVRADPGRDPLLAFAPRPSELGPPDPRLAMGSVGSGVAHAQEFAMKSVGTRTGGGGSQGSFPGPRGSGSGASRERPGRYPSEDKGLANSLYLNGELRGSDHTDVCGNVVGSSGGSSSSGGSDKAPPQYREPSHPPKLLATSGKLDQCSEPLVRPSAFKPVVPKNFHSMQNLCPPQTNGTPEGRQGPGGLKGGLDKSRTMTPAGGSGSGLSDSGRNSLTSLPTYSSSYSQHLAPLSASTSHINRIGTASYGSGSGGSSGGGSGYQDLGTSDSGRASSKSGSSSSMGRPGHLGSGEGGGGGLPFAACSPPSPSALIQELEERLWEKEQEVAALRRSLEQSEAAVAQVLEERQKAWERELAELRQGCSGKLQQVARRAQRAQQGLQLQVLRLQQDKKQLQEEAARLMRQREELEDKVAACQKEQADFLPRIEETKWEVCQKAGEISLLKQQLKDSQADVSQKLSEIVGLRSQLREGRASLREKEEQLLSLRDSFSSKQASLELGEGELPAACLKPALTPVDPAEPQDALATCESDEAKMRRQAGVAAAASLVSVDGEAEAGGESGTRALRREVGRLQAELAAERRARERQGASFAEERRVWLEEKEKVIEYQKQLQLSYVEMYQRNQQLERRLRERGAAGGASTPTPQHGEEKKAWTPSRLERIESTEI</sequence>
<protein>
    <recommendedName>
        <fullName evidence="6">Leucine zipper putative tumor suppressor 3</fullName>
    </recommendedName>
    <alternativeName>
        <fullName evidence="2">ProSAP-interacting protein 1</fullName>
        <shortName evidence="2">ProSAPiP1</shortName>
    </alternativeName>
</protein>
<reference key="1">
    <citation type="journal article" date="1998" name="DNA Res.">
        <title>Prediction of the coding sequences of unidentified human genes. IX. The complete sequences of 100 new cDNA clones from brain which can code for large proteins in vitro.</title>
        <authorList>
            <person name="Nagase T."/>
            <person name="Ishikawa K."/>
            <person name="Miyajima N."/>
            <person name="Tanaka A."/>
            <person name="Kotani H."/>
            <person name="Nomura N."/>
            <person name="Ohara O."/>
        </authorList>
    </citation>
    <scope>NUCLEOTIDE SEQUENCE [LARGE SCALE MRNA] (ISOFORM 1)</scope>
    <source>
        <tissue>Brain</tissue>
    </source>
</reference>
<reference key="2">
    <citation type="journal article" date="2001" name="Nature">
        <title>The DNA sequence and comparative analysis of human chromosome 20.</title>
        <authorList>
            <person name="Deloukas P."/>
            <person name="Matthews L.H."/>
            <person name="Ashurst J.L."/>
            <person name="Burton J."/>
            <person name="Gilbert J.G.R."/>
            <person name="Jones M."/>
            <person name="Stavrides G."/>
            <person name="Almeida J.P."/>
            <person name="Babbage A.K."/>
            <person name="Bagguley C.L."/>
            <person name="Bailey J."/>
            <person name="Barlow K.F."/>
            <person name="Bates K.N."/>
            <person name="Beard L.M."/>
            <person name="Beare D.M."/>
            <person name="Beasley O.P."/>
            <person name="Bird C.P."/>
            <person name="Blakey S.E."/>
            <person name="Bridgeman A.M."/>
            <person name="Brown A.J."/>
            <person name="Buck D."/>
            <person name="Burrill W.D."/>
            <person name="Butler A.P."/>
            <person name="Carder C."/>
            <person name="Carter N.P."/>
            <person name="Chapman J.C."/>
            <person name="Clamp M."/>
            <person name="Clark G."/>
            <person name="Clark L.N."/>
            <person name="Clark S.Y."/>
            <person name="Clee C.M."/>
            <person name="Clegg S."/>
            <person name="Cobley V.E."/>
            <person name="Collier R.E."/>
            <person name="Connor R.E."/>
            <person name="Corby N.R."/>
            <person name="Coulson A."/>
            <person name="Coville G.J."/>
            <person name="Deadman R."/>
            <person name="Dhami P.D."/>
            <person name="Dunn M."/>
            <person name="Ellington A.G."/>
            <person name="Frankland J.A."/>
            <person name="Fraser A."/>
            <person name="French L."/>
            <person name="Garner P."/>
            <person name="Grafham D.V."/>
            <person name="Griffiths C."/>
            <person name="Griffiths M.N.D."/>
            <person name="Gwilliam R."/>
            <person name="Hall R.E."/>
            <person name="Hammond S."/>
            <person name="Harley J.L."/>
            <person name="Heath P.D."/>
            <person name="Ho S."/>
            <person name="Holden J.L."/>
            <person name="Howden P.J."/>
            <person name="Huckle E."/>
            <person name="Hunt A.R."/>
            <person name="Hunt S.E."/>
            <person name="Jekosch K."/>
            <person name="Johnson C.M."/>
            <person name="Johnson D."/>
            <person name="Kay M.P."/>
            <person name="Kimberley A.M."/>
            <person name="King A."/>
            <person name="Knights A."/>
            <person name="Laird G.K."/>
            <person name="Lawlor S."/>
            <person name="Lehvaeslaiho M.H."/>
            <person name="Leversha M.A."/>
            <person name="Lloyd C."/>
            <person name="Lloyd D.M."/>
            <person name="Lovell J.D."/>
            <person name="Marsh V.L."/>
            <person name="Martin S.L."/>
            <person name="McConnachie L.J."/>
            <person name="McLay K."/>
            <person name="McMurray A.A."/>
            <person name="Milne S.A."/>
            <person name="Mistry D."/>
            <person name="Moore M.J.F."/>
            <person name="Mullikin J.C."/>
            <person name="Nickerson T."/>
            <person name="Oliver K."/>
            <person name="Parker A."/>
            <person name="Patel R."/>
            <person name="Pearce T.A.V."/>
            <person name="Peck A.I."/>
            <person name="Phillimore B.J.C.T."/>
            <person name="Prathalingam S.R."/>
            <person name="Plumb R.W."/>
            <person name="Ramsay H."/>
            <person name="Rice C.M."/>
            <person name="Ross M.T."/>
            <person name="Scott C.E."/>
            <person name="Sehra H.K."/>
            <person name="Shownkeen R."/>
            <person name="Sims S."/>
            <person name="Skuce C.D."/>
            <person name="Smith M.L."/>
            <person name="Soderlund C."/>
            <person name="Steward C.A."/>
            <person name="Sulston J.E."/>
            <person name="Swann R.M."/>
            <person name="Sycamore N."/>
            <person name="Taylor R."/>
            <person name="Tee L."/>
            <person name="Thomas D.W."/>
            <person name="Thorpe A."/>
            <person name="Tracey A."/>
            <person name="Tromans A.C."/>
            <person name="Vaudin M."/>
            <person name="Wall M."/>
            <person name="Wallis J.M."/>
            <person name="Whitehead S.L."/>
            <person name="Whittaker P."/>
            <person name="Willey D.L."/>
            <person name="Williams L."/>
            <person name="Williams S.A."/>
            <person name="Wilming L."/>
            <person name="Wray P.W."/>
            <person name="Hubbard T."/>
            <person name="Durbin R.M."/>
            <person name="Bentley D.R."/>
            <person name="Beck S."/>
            <person name="Rogers J."/>
        </authorList>
    </citation>
    <scope>NUCLEOTIDE SEQUENCE [LARGE SCALE GENOMIC DNA]</scope>
</reference>
<reference key="3">
    <citation type="submission" date="2010-02" db="EMBL/GenBank/DDBJ databases">
        <authorList>
            <person name="Mural R.J."/>
            <person name="Istrail S."/>
            <person name="Sutton G.G."/>
            <person name="Florea L."/>
            <person name="Halpern A.L."/>
            <person name="Mobarry C.M."/>
            <person name="Lippert R."/>
            <person name="Walenz B."/>
            <person name="Shatkay H."/>
            <person name="Dew I."/>
            <person name="Miller J.R."/>
            <person name="Flanigan M.J."/>
            <person name="Edwards N.J."/>
            <person name="Bolanos R."/>
            <person name="Fasulo D."/>
            <person name="Halldorsson B.V."/>
            <person name="Hannenhalli S."/>
            <person name="Turner R."/>
            <person name="Yooseph S."/>
            <person name="Lu F."/>
            <person name="Nusskern D.R."/>
            <person name="Shue B.C."/>
            <person name="Zheng X.H."/>
            <person name="Zhong F."/>
            <person name="Delcher A.L."/>
            <person name="Huson D.H."/>
            <person name="Kravitz S.A."/>
            <person name="Mouchard L."/>
            <person name="Reinert K."/>
            <person name="Remington K.A."/>
            <person name="Clark A.G."/>
            <person name="Waterman M.S."/>
            <person name="Eichler E.E."/>
            <person name="Adams M.D."/>
            <person name="Hunkapiller M.W."/>
            <person name="Myers E.W."/>
            <person name="Venter J.C."/>
        </authorList>
    </citation>
    <scope>NUCLEOTIDE SEQUENCE [LARGE SCALE GENOMIC DNA]</scope>
</reference>
<reference key="4">
    <citation type="journal article" date="2004" name="Genome Res.">
        <title>The status, quality, and expansion of the NIH full-length cDNA project: the Mammalian Gene Collection (MGC).</title>
        <authorList>
            <consortium name="The MGC Project Team"/>
        </authorList>
    </citation>
    <scope>NUCLEOTIDE SEQUENCE [LARGE SCALE MRNA] (ISOFORM 2)</scope>
    <source>
        <tissue>Brain</tissue>
    </source>
</reference>
<gene>
    <name evidence="8" type="primary">LZTS3</name>
    <name evidence="7" type="synonym">KIAA0552</name>
    <name evidence="2" type="synonym">PROSAPIP1</name>
</gene>
<organism>
    <name type="scientific">Homo sapiens</name>
    <name type="common">Human</name>
    <dbReference type="NCBI Taxonomy" id="9606"/>
    <lineage>
        <taxon>Eukaryota</taxon>
        <taxon>Metazoa</taxon>
        <taxon>Chordata</taxon>
        <taxon>Craniata</taxon>
        <taxon>Vertebrata</taxon>
        <taxon>Euteleostomi</taxon>
        <taxon>Mammalia</taxon>
        <taxon>Eutheria</taxon>
        <taxon>Euarchontoglires</taxon>
        <taxon>Primates</taxon>
        <taxon>Haplorrhini</taxon>
        <taxon>Catarrhini</taxon>
        <taxon>Hominidae</taxon>
        <taxon>Homo</taxon>
    </lineage>
</organism>
<dbReference type="EMBL" id="AB011124">
    <property type="protein sequence ID" value="BAA25478.2"/>
    <property type="status" value="ALT_INIT"/>
    <property type="molecule type" value="mRNA"/>
</dbReference>
<dbReference type="EMBL" id="AL121891">
    <property type="status" value="NOT_ANNOTATED_CDS"/>
    <property type="molecule type" value="Genomic_DNA"/>
</dbReference>
<dbReference type="EMBL" id="CH471133">
    <property type="protein sequence ID" value="EAX10545.1"/>
    <property type="molecule type" value="Genomic_DNA"/>
</dbReference>
<dbReference type="EMBL" id="CH471133">
    <property type="protein sequence ID" value="EAX10546.1"/>
    <property type="molecule type" value="Genomic_DNA"/>
</dbReference>
<dbReference type="EMBL" id="CH471133">
    <property type="protein sequence ID" value="EAX10547.1"/>
    <property type="molecule type" value="Genomic_DNA"/>
</dbReference>
<dbReference type="EMBL" id="BC038860">
    <property type="protein sequence ID" value="AAH38860.1"/>
    <property type="molecule type" value="mRNA"/>
</dbReference>
<dbReference type="CCDS" id="CCDS13049.1">
    <molecule id="O60299-1"/>
</dbReference>
<dbReference type="CCDS" id="CCDS63218.1">
    <molecule id="O60299-2"/>
</dbReference>
<dbReference type="PIR" id="T00328">
    <property type="entry name" value="T00328"/>
</dbReference>
<dbReference type="RefSeq" id="NP_001269462.1">
    <molecule id="O60299-2"/>
    <property type="nucleotide sequence ID" value="NM_001282533.2"/>
</dbReference>
<dbReference type="RefSeq" id="NP_001352547.1">
    <molecule id="O60299-1"/>
    <property type="nucleotide sequence ID" value="NM_001365618.1"/>
</dbReference>
<dbReference type="RefSeq" id="NP_001375118.1">
    <molecule id="O60299-1"/>
    <property type="nucleotide sequence ID" value="NM_001388189.1"/>
</dbReference>
<dbReference type="RefSeq" id="NP_001375119.1">
    <molecule id="O60299-1"/>
    <property type="nucleotide sequence ID" value="NM_001388190.1"/>
</dbReference>
<dbReference type="RefSeq" id="NP_001375120.1">
    <molecule id="O60299-1"/>
    <property type="nucleotide sequence ID" value="NM_001388191.1"/>
</dbReference>
<dbReference type="RefSeq" id="XP_005260949.1">
    <property type="nucleotide sequence ID" value="XM_005260892.1"/>
</dbReference>
<dbReference type="RefSeq" id="XP_005260950.1">
    <property type="nucleotide sequence ID" value="XM_005260893.2"/>
</dbReference>
<dbReference type="RefSeq" id="XP_054180251.1">
    <molecule id="O60299-1"/>
    <property type="nucleotide sequence ID" value="XM_054324276.1"/>
</dbReference>
<dbReference type="RefSeq" id="XP_054180252.1">
    <molecule id="O60299-1"/>
    <property type="nucleotide sequence ID" value="XM_054324277.1"/>
</dbReference>
<dbReference type="SMR" id="O60299"/>
<dbReference type="BioGRID" id="115109">
    <property type="interactions" value="30"/>
</dbReference>
<dbReference type="FunCoup" id="O60299">
    <property type="interactions" value="96"/>
</dbReference>
<dbReference type="IntAct" id="O60299">
    <property type="interactions" value="22"/>
</dbReference>
<dbReference type="MINT" id="O60299"/>
<dbReference type="STRING" id="9606.ENSP00000353496"/>
<dbReference type="GlyGen" id="O60299">
    <property type="glycosylation" value="2 sites, 1 O-linked glycan (1 site)"/>
</dbReference>
<dbReference type="iPTMnet" id="O60299"/>
<dbReference type="PhosphoSitePlus" id="O60299"/>
<dbReference type="BioMuta" id="LZTS3"/>
<dbReference type="jPOST" id="O60299"/>
<dbReference type="MassIVE" id="O60299"/>
<dbReference type="PaxDb" id="9606-ENSP00000353496"/>
<dbReference type="PeptideAtlas" id="O60299"/>
<dbReference type="ProteomicsDB" id="49329">
    <molecule id="O60299-1"/>
</dbReference>
<dbReference type="ProteomicsDB" id="49330">
    <molecule id="O60299-2"/>
</dbReference>
<dbReference type="Pumba" id="O60299"/>
<dbReference type="Antibodypedia" id="23459">
    <property type="antibodies" value="92 antibodies from 25 providers"/>
</dbReference>
<dbReference type="DNASU" id="9762"/>
<dbReference type="Ensembl" id="ENST00000329152.7">
    <molecule id="O60299-1"/>
    <property type="protein sequence ID" value="ENSP00000332123.3"/>
    <property type="gene ID" value="ENSG00000088899.16"/>
</dbReference>
<dbReference type="Ensembl" id="ENST00000337576.7">
    <molecule id="O60299-1"/>
    <property type="protein sequence ID" value="ENSP00000338166.6"/>
    <property type="gene ID" value="ENSG00000088899.16"/>
</dbReference>
<dbReference type="Ensembl" id="ENST00000360342.7">
    <molecule id="O60299-2"/>
    <property type="protein sequence ID" value="ENSP00000353496.3"/>
    <property type="gene ID" value="ENSG00000088899.16"/>
</dbReference>
<dbReference type="Ensembl" id="ENST00000645462.1">
    <molecule id="O60299-2"/>
    <property type="protein sequence ID" value="ENSP00000495241.1"/>
    <property type="gene ID" value="ENSG00000088899.16"/>
</dbReference>
<dbReference type="GeneID" id="9762"/>
<dbReference type="KEGG" id="hsa:9762"/>
<dbReference type="MANE-Select" id="ENST00000337576.7">
    <property type="protein sequence ID" value="ENSP00000338166.6"/>
    <property type="RefSeq nucleotide sequence ID" value="NM_001365618.1"/>
    <property type="RefSeq protein sequence ID" value="NP_001352547.1"/>
</dbReference>
<dbReference type="UCSC" id="uc002wia.3">
    <molecule id="O60299-1"/>
    <property type="organism name" value="human"/>
</dbReference>
<dbReference type="AGR" id="HGNC:30139"/>
<dbReference type="CTD" id="9762"/>
<dbReference type="DisGeNET" id="9762"/>
<dbReference type="GeneCards" id="LZTS3"/>
<dbReference type="HGNC" id="HGNC:30139">
    <property type="gene designation" value="LZTS3"/>
</dbReference>
<dbReference type="HPA" id="ENSG00000088899">
    <property type="expression patterns" value="Tissue enhanced (brain)"/>
</dbReference>
<dbReference type="MIM" id="610484">
    <property type="type" value="gene"/>
</dbReference>
<dbReference type="neXtProt" id="NX_O60299"/>
<dbReference type="OpenTargets" id="ENSG00000088899"/>
<dbReference type="VEuPathDB" id="HostDB:ENSG00000088899"/>
<dbReference type="eggNOG" id="ENOG502QWFS">
    <property type="taxonomic scope" value="Eukaryota"/>
</dbReference>
<dbReference type="GeneTree" id="ENSGT00940000154078"/>
<dbReference type="HOGENOM" id="CLU_026379_1_0_1"/>
<dbReference type="InParanoid" id="O60299"/>
<dbReference type="OMA" id="NGMAENR"/>
<dbReference type="OrthoDB" id="10030037at2759"/>
<dbReference type="PAN-GO" id="O60299">
    <property type="GO annotations" value="2 GO annotations based on evolutionary models"/>
</dbReference>
<dbReference type="PhylomeDB" id="O60299"/>
<dbReference type="PathwayCommons" id="O60299"/>
<dbReference type="SignaLink" id="O60299"/>
<dbReference type="BioGRID-ORCS" id="9762">
    <property type="hits" value="8 hits in 975 CRISPR screens"/>
</dbReference>
<dbReference type="CD-CODE" id="FB4E32DD">
    <property type="entry name" value="Presynaptic clusters and postsynaptic densities"/>
</dbReference>
<dbReference type="ChiTaRS" id="LZTS3">
    <property type="organism name" value="human"/>
</dbReference>
<dbReference type="GenomeRNAi" id="9762"/>
<dbReference type="Pharos" id="O60299">
    <property type="development level" value="Tbio"/>
</dbReference>
<dbReference type="PRO" id="PR:O60299"/>
<dbReference type="Proteomes" id="UP000005640">
    <property type="component" value="Chromosome 20"/>
</dbReference>
<dbReference type="RNAct" id="O60299">
    <property type="molecule type" value="protein"/>
</dbReference>
<dbReference type="Bgee" id="ENSG00000088899">
    <property type="expression patterns" value="Expressed in Brodmann (1909) area 10 and 182 other cell types or tissues"/>
</dbReference>
<dbReference type="GO" id="GO:0005737">
    <property type="term" value="C:cytoplasm"/>
    <property type="evidence" value="ECO:0007669"/>
    <property type="project" value="UniProtKB-KW"/>
</dbReference>
<dbReference type="GO" id="GO:0005856">
    <property type="term" value="C:cytoskeleton"/>
    <property type="evidence" value="ECO:0007669"/>
    <property type="project" value="UniProtKB-SubCell"/>
</dbReference>
<dbReference type="GO" id="GO:0043197">
    <property type="term" value="C:dendritic spine"/>
    <property type="evidence" value="ECO:0000318"/>
    <property type="project" value="GO_Central"/>
</dbReference>
<dbReference type="GO" id="GO:0014069">
    <property type="term" value="C:postsynaptic density"/>
    <property type="evidence" value="ECO:0000250"/>
    <property type="project" value="UniProtKB"/>
</dbReference>
<dbReference type="GO" id="GO:0045202">
    <property type="term" value="C:synapse"/>
    <property type="evidence" value="ECO:0000250"/>
    <property type="project" value="UniProtKB"/>
</dbReference>
<dbReference type="GO" id="GO:0061001">
    <property type="term" value="P:regulation of dendritic spine morphogenesis"/>
    <property type="evidence" value="ECO:0000250"/>
    <property type="project" value="UniProtKB"/>
</dbReference>
<dbReference type="InterPro" id="IPR045329">
    <property type="entry name" value="LZTS"/>
</dbReference>
<dbReference type="PANTHER" id="PTHR19354">
    <property type="entry name" value="ZIPPER PUTATIVE TUMOR SUPPRESSOR 2 HOMOLOG-LIKE PROTEIN-RELATED"/>
    <property type="match status" value="1"/>
</dbReference>
<dbReference type="PANTHER" id="PTHR19354:SF6">
    <property type="entry name" value="ZIPPER PUTATIVE TUMOR SUPPRESSOR 3-RELATED"/>
    <property type="match status" value="1"/>
</dbReference>
<dbReference type="Pfam" id="PF06818">
    <property type="entry name" value="Fez1"/>
    <property type="match status" value="1"/>
</dbReference>
<accession>O60299</accession>
<accession>A2A2Q7</accession>
<accession>D3DVX6</accession>
<accession>Q8IXX8</accession>
<name>LZTS3_HUMAN</name>
<keyword id="KW-0025">Alternative splicing</keyword>
<keyword id="KW-0966">Cell projection</keyword>
<keyword id="KW-0175">Coiled coil</keyword>
<keyword id="KW-0963">Cytoplasm</keyword>
<keyword id="KW-0206">Cytoskeleton</keyword>
<keyword id="KW-0597">Phosphoprotein</keyword>
<keyword id="KW-1267">Proteomics identification</keyword>
<keyword id="KW-1185">Reference proteome</keyword>
<keyword id="KW-0770">Synapse</keyword>
<comment type="function">
    <text evidence="2">May be involved in promoting the maturation of dendritic spines, probably via regulating SIPA1L1 levels at the postsynaptic density of synapses.</text>
</comment>
<comment type="subunit">
    <text evidence="2">Interacts (via C-terminus) with SHANK3 (via PDZ domain). Interacts (via coiled coil) with SIPA1L1. Can form homooligomers.</text>
</comment>
<comment type="subcellular location">
    <subcellularLocation>
        <location evidence="2">Synapse</location>
    </subcellularLocation>
    <subcellularLocation>
        <location evidence="2">Postsynaptic density</location>
    </subcellularLocation>
    <subcellularLocation>
        <location evidence="2">Cell projection</location>
        <location evidence="2">Dendritic spine</location>
    </subcellularLocation>
    <subcellularLocation>
        <location evidence="2">Cell projection</location>
        <location evidence="2">Dendrite</location>
    </subcellularLocation>
    <subcellularLocation>
        <location evidence="2">Cytoplasm</location>
        <location evidence="2">Cytoskeleton</location>
    </subcellularLocation>
    <text evidence="2">Rather found at excitatory than inhibitory synapses.</text>
</comment>
<comment type="alternative products">
    <event type="alternative splicing"/>
    <isoform>
        <id>O60299-1</id>
        <name>1</name>
        <sequence type="displayed"/>
    </isoform>
    <isoform>
        <id>O60299-2</id>
        <name>2</name>
        <sequence type="described" ref="VSP_039202"/>
    </isoform>
</comment>
<comment type="similarity">
    <text evidence="6">Belongs to the LZTS3 family.</text>
</comment>
<comment type="sequence caution" evidence="6">
    <conflict type="erroneous initiation">
        <sequence resource="EMBL-CDS" id="BAA25478"/>
    </conflict>
    <text>Extended N-terminus.</text>
</comment>
<proteinExistence type="evidence at protein level"/>
<feature type="chain" id="PRO_0000050760" description="Leucine zipper putative tumor suppressor 3">
    <location>
        <begin position="1"/>
        <end position="673"/>
    </location>
</feature>
<feature type="region of interest" description="Disordered" evidence="4">
    <location>
        <begin position="1"/>
        <end position="157"/>
    </location>
</feature>
<feature type="region of interest" description="Disordered" evidence="4">
    <location>
        <begin position="172"/>
        <end position="239"/>
    </location>
</feature>
<feature type="region of interest" description="Disordered" evidence="4">
    <location>
        <begin position="251"/>
        <end position="317"/>
    </location>
</feature>
<feature type="region of interest" description="Disordered" evidence="4">
    <location>
        <begin position="635"/>
        <end position="673"/>
    </location>
</feature>
<feature type="coiled-coil region" evidence="3">
    <location>
        <begin position="317"/>
        <end position="496"/>
    </location>
</feature>
<feature type="coiled-coil region" evidence="3">
    <location>
        <begin position="571"/>
        <end position="639"/>
    </location>
</feature>
<feature type="compositionally biased region" description="Basic and acidic residues" evidence="4">
    <location>
        <begin position="79"/>
        <end position="92"/>
    </location>
</feature>
<feature type="compositionally biased region" description="Polar residues" evidence="4">
    <location>
        <begin position="173"/>
        <end position="186"/>
    </location>
</feature>
<feature type="compositionally biased region" description="Low complexity" evidence="4">
    <location>
        <begin position="215"/>
        <end position="235"/>
    </location>
</feature>
<feature type="compositionally biased region" description="Gly residues" evidence="4">
    <location>
        <begin position="258"/>
        <end position="269"/>
    </location>
</feature>
<feature type="compositionally biased region" description="Low complexity" evidence="4">
    <location>
        <begin position="274"/>
        <end position="294"/>
    </location>
</feature>
<feature type="compositionally biased region" description="Gly residues" evidence="4">
    <location>
        <begin position="295"/>
        <end position="307"/>
    </location>
</feature>
<feature type="compositionally biased region" description="Basic and acidic residues" evidence="4">
    <location>
        <begin position="653"/>
        <end position="673"/>
    </location>
</feature>
<feature type="modified residue" description="Phosphoserine" evidence="1">
    <location>
        <position position="316"/>
    </location>
</feature>
<feature type="modified residue" description="Phosphoserine" evidence="1">
    <location>
        <position position="318"/>
    </location>
</feature>
<feature type="splice variant" id="VSP_039202" description="In isoform 2." evidence="5">
    <location>
        <begin position="351"/>
        <end position="396"/>
    </location>
</feature>
<feature type="sequence conflict" description="In Ref. 4; AAH38860." evidence="6" ref="4">
    <original>S</original>
    <variation>Y</variation>
    <location>
        <position position="557"/>
    </location>
</feature>